<sequence>MELDKVKTHSLHCNAAVLSSLQAPTSATSPQSFTSKANAVAEAAFIENSNQQQNVQKDLNSHNRDCDSPVSSTSELEKEFDDLRKLHTSSLTNSVVVGKSTGSLNGDYSITSATSKTKTLESVVTINSATGSACLTIASTADHIKKRIPNSRTPTRKALRIKFYRNGDRFYPGVTIPVSNERYRSFERLFEDLTRLLEENVKIPGAVRTIYNMCGKKITSLDELEDGQSYVCSCNNENFKKVEYNPGSQPLSNLTLTNNSRPYNQRLAKHRPASPLKNGLLVGSSPLAVCGGGTGNGSPLIASKSSDRVTVVHPRIVTLIRSGTKPRRIMRLLLNKRNSPSFDHVLTAITQVVRLDTGYVRKVFTLSGISVVQLSDFFESDDVFFAYGTERINTAEDFKLEPEELKAINVIRKTMRTAGTTCKGPKPKMPIKSKKVYPPSVNSEAFKAATAPEDDRHATLLTSTGIEINELPSNIRSTYTLGKIIGDGNFAIVFKIKHRQTGDSYALKIIDKNKCKGKEHYIDAEVRVMKKLNHPHIISLILSVDQNTNMYLVLEYVSGGDLFDAITQVTRFAESQSRIMIRHLGAAMTYLHSMGIVHRDIKPENLLVKLDEHGNVLELKLADFGLACEVNDLLYAVCGTPTYVAPEILLEVGYGLKIDVWAAGIILYILLCGFPPFVAPDNQQEPLFDAIISGIYEFPDPYWSDIGDGVRDLIANMLQSDPDVRFTSEDILDHYWTIGNEGNECTTYKR</sequence>
<protein>
    <recommendedName>
        <fullName evidence="2 8">Serine/threonine-protein kinase GE16371</fullName>
        <ecNumber>2.7.11.1</ecNumber>
    </recommendedName>
    <alternativeName>
        <fullName>Doublecortin-like and CAM kinase-like protein</fullName>
    </alternativeName>
</protein>
<name>DCLK_DROYA</name>
<comment type="catalytic activity">
    <reaction evidence="1">
        <text>L-seryl-[protein] + ATP = O-phospho-L-seryl-[protein] + ADP + H(+)</text>
        <dbReference type="Rhea" id="RHEA:17989"/>
        <dbReference type="Rhea" id="RHEA-COMP:9863"/>
        <dbReference type="Rhea" id="RHEA-COMP:11604"/>
        <dbReference type="ChEBI" id="CHEBI:15378"/>
        <dbReference type="ChEBI" id="CHEBI:29999"/>
        <dbReference type="ChEBI" id="CHEBI:30616"/>
        <dbReference type="ChEBI" id="CHEBI:83421"/>
        <dbReference type="ChEBI" id="CHEBI:456216"/>
        <dbReference type="EC" id="2.7.11.1"/>
    </reaction>
</comment>
<comment type="catalytic activity">
    <reaction evidence="1">
        <text>L-threonyl-[protein] + ATP = O-phospho-L-threonyl-[protein] + ADP + H(+)</text>
        <dbReference type="Rhea" id="RHEA:46608"/>
        <dbReference type="Rhea" id="RHEA-COMP:11060"/>
        <dbReference type="Rhea" id="RHEA-COMP:11605"/>
        <dbReference type="ChEBI" id="CHEBI:15378"/>
        <dbReference type="ChEBI" id="CHEBI:30013"/>
        <dbReference type="ChEBI" id="CHEBI:30616"/>
        <dbReference type="ChEBI" id="CHEBI:61977"/>
        <dbReference type="ChEBI" id="CHEBI:456216"/>
        <dbReference type="EC" id="2.7.11.1"/>
    </reaction>
</comment>
<comment type="similarity">
    <text evidence="3">Belongs to the protein kinase superfamily. CAMK Ser/Thr protein kinase family. CaMK subfamily.</text>
</comment>
<comment type="sequence caution" evidence="7">
    <conflict type="erroneous gene model prediction">
        <sequence resource="EMBL-CDS" id="EDW99417"/>
    </conflict>
</comment>
<dbReference type="EC" id="2.7.11.1"/>
<dbReference type="EMBL" id="CH891639">
    <property type="protein sequence ID" value="EDW99417.1"/>
    <property type="status" value="ALT_SEQ"/>
    <property type="molecule type" value="Genomic_DNA"/>
</dbReference>
<dbReference type="RefSeq" id="XP_015045238.1">
    <property type="nucleotide sequence ID" value="XM_015189752.1"/>
</dbReference>
<dbReference type="SMR" id="B4IT27"/>
<dbReference type="EnsemblMetazoa" id="FBtr0399882">
    <property type="protein sequence ID" value="FBpp0358887"/>
    <property type="gene ID" value="FBgn0233900"/>
</dbReference>
<dbReference type="EnsemblMetazoa" id="FBtr0402347">
    <property type="protein sequence ID" value="FBpp0361201"/>
    <property type="gene ID" value="FBgn0233900"/>
</dbReference>
<dbReference type="EnsemblMetazoa" id="FBtr0404589">
    <property type="protein sequence ID" value="FBpp0363290"/>
    <property type="gene ID" value="FBgn0233900"/>
</dbReference>
<dbReference type="EnsemblMetazoa" id="XM_002086103.4">
    <property type="protein sequence ID" value="XP_002086139.2"/>
    <property type="gene ID" value="LOC6539240"/>
</dbReference>
<dbReference type="EnsemblMetazoa" id="XM_015189753.3">
    <property type="protein sequence ID" value="XP_015045239.1"/>
    <property type="gene ID" value="LOC6539240"/>
</dbReference>
<dbReference type="GeneID" id="6539240"/>
<dbReference type="eggNOG" id="KOG0032">
    <property type="taxonomic scope" value="Eukaryota"/>
</dbReference>
<dbReference type="eggNOG" id="KOG3757">
    <property type="taxonomic scope" value="Eukaryota"/>
</dbReference>
<dbReference type="OrthoDB" id="1738954at2759"/>
<dbReference type="Proteomes" id="UP000002282">
    <property type="component" value="Unassembled WGS sequence"/>
</dbReference>
<dbReference type="GO" id="GO:0005524">
    <property type="term" value="F:ATP binding"/>
    <property type="evidence" value="ECO:0007669"/>
    <property type="project" value="UniProtKB-KW"/>
</dbReference>
<dbReference type="GO" id="GO:0106310">
    <property type="term" value="F:protein serine kinase activity"/>
    <property type="evidence" value="ECO:0007669"/>
    <property type="project" value="RHEA"/>
</dbReference>
<dbReference type="GO" id="GO:0004674">
    <property type="term" value="F:protein serine/threonine kinase activity"/>
    <property type="evidence" value="ECO:0000250"/>
    <property type="project" value="UniProtKB"/>
</dbReference>
<dbReference type="GO" id="GO:0035556">
    <property type="term" value="P:intracellular signal transduction"/>
    <property type="evidence" value="ECO:0007669"/>
    <property type="project" value="InterPro"/>
</dbReference>
<dbReference type="CDD" id="cd16109">
    <property type="entry name" value="DCX1"/>
    <property type="match status" value="1"/>
</dbReference>
<dbReference type="FunFam" id="3.30.200.20:FF:000042">
    <property type="entry name" value="Aurora kinase A"/>
    <property type="match status" value="1"/>
</dbReference>
<dbReference type="FunFam" id="1.10.510.10:FF:000866">
    <property type="entry name" value="Serine/threonine-protein kinase GA29083"/>
    <property type="match status" value="1"/>
</dbReference>
<dbReference type="FunFam" id="3.10.20.230:FF:000017">
    <property type="entry name" value="Serine/threonine-protein kinase GA29083"/>
    <property type="match status" value="1"/>
</dbReference>
<dbReference type="FunFam" id="3.10.20.230:FF:000021">
    <property type="entry name" value="Serine/threonine-protein kinase GA29083"/>
    <property type="match status" value="1"/>
</dbReference>
<dbReference type="Gene3D" id="3.10.20.230">
    <property type="entry name" value="Doublecortin domain"/>
    <property type="match status" value="2"/>
</dbReference>
<dbReference type="Gene3D" id="1.10.510.10">
    <property type="entry name" value="Transferase(Phosphotransferase) domain 1"/>
    <property type="match status" value="1"/>
</dbReference>
<dbReference type="InterPro" id="IPR003533">
    <property type="entry name" value="Doublecortin_dom"/>
</dbReference>
<dbReference type="InterPro" id="IPR036572">
    <property type="entry name" value="Doublecortin_dom_sf"/>
</dbReference>
<dbReference type="InterPro" id="IPR011009">
    <property type="entry name" value="Kinase-like_dom_sf"/>
</dbReference>
<dbReference type="InterPro" id="IPR000719">
    <property type="entry name" value="Prot_kinase_dom"/>
</dbReference>
<dbReference type="InterPro" id="IPR017441">
    <property type="entry name" value="Protein_kinase_ATP_BS"/>
</dbReference>
<dbReference type="InterPro" id="IPR008271">
    <property type="entry name" value="Ser/Thr_kinase_AS"/>
</dbReference>
<dbReference type="PANTHER" id="PTHR24347">
    <property type="entry name" value="SERINE/THREONINE-PROTEIN KINASE"/>
    <property type="match status" value="1"/>
</dbReference>
<dbReference type="Pfam" id="PF03607">
    <property type="entry name" value="DCX"/>
    <property type="match status" value="2"/>
</dbReference>
<dbReference type="Pfam" id="PF00069">
    <property type="entry name" value="Pkinase"/>
    <property type="match status" value="1"/>
</dbReference>
<dbReference type="SMART" id="SM00537">
    <property type="entry name" value="DCX"/>
    <property type="match status" value="2"/>
</dbReference>
<dbReference type="SMART" id="SM00220">
    <property type="entry name" value="S_TKc"/>
    <property type="match status" value="1"/>
</dbReference>
<dbReference type="SUPFAM" id="SSF89837">
    <property type="entry name" value="Doublecortin (DC)"/>
    <property type="match status" value="2"/>
</dbReference>
<dbReference type="SUPFAM" id="SSF56112">
    <property type="entry name" value="Protein kinase-like (PK-like)"/>
    <property type="match status" value="1"/>
</dbReference>
<dbReference type="PROSITE" id="PS50309">
    <property type="entry name" value="DC"/>
    <property type="match status" value="2"/>
</dbReference>
<dbReference type="PROSITE" id="PS00107">
    <property type="entry name" value="PROTEIN_KINASE_ATP"/>
    <property type="match status" value="1"/>
</dbReference>
<dbReference type="PROSITE" id="PS50011">
    <property type="entry name" value="PROTEIN_KINASE_DOM"/>
    <property type="match status" value="1"/>
</dbReference>
<dbReference type="PROSITE" id="PS00108">
    <property type="entry name" value="PROTEIN_KINASE_ST"/>
    <property type="match status" value="1"/>
</dbReference>
<organism>
    <name type="scientific">Drosophila yakuba</name>
    <name type="common">Fruit fly</name>
    <dbReference type="NCBI Taxonomy" id="7245"/>
    <lineage>
        <taxon>Eukaryota</taxon>
        <taxon>Metazoa</taxon>
        <taxon>Ecdysozoa</taxon>
        <taxon>Arthropoda</taxon>
        <taxon>Hexapoda</taxon>
        <taxon>Insecta</taxon>
        <taxon>Pterygota</taxon>
        <taxon>Neoptera</taxon>
        <taxon>Endopterygota</taxon>
        <taxon>Diptera</taxon>
        <taxon>Brachycera</taxon>
        <taxon>Muscomorpha</taxon>
        <taxon>Ephydroidea</taxon>
        <taxon>Drosophilidae</taxon>
        <taxon>Drosophila</taxon>
        <taxon>Sophophora</taxon>
    </lineage>
</organism>
<proteinExistence type="inferred from homology"/>
<reference evidence="8" key="1">
    <citation type="journal article" date="2007" name="Nature">
        <title>Evolution of genes and genomes on the Drosophila phylogeny.</title>
        <authorList>
            <consortium name="Drosophila 12 genomes consortium"/>
        </authorList>
    </citation>
    <scope>NUCLEOTIDE SEQUENCE [LARGE SCALE GENOMIC DNA]</scope>
    <source>
        <strain evidence="8">Tai18E2 / Tucson 14021-0261.01</strain>
    </source>
</reference>
<gene>
    <name type="ORF">GE16371</name>
</gene>
<evidence type="ECO:0000250" key="1">
    <source>
        <dbReference type="UniProtKB" id="P28523"/>
    </source>
</evidence>
<evidence type="ECO:0000250" key="2">
    <source>
        <dbReference type="UniProtKB" id="Q7PLI7"/>
    </source>
</evidence>
<evidence type="ECO:0000255" key="3"/>
<evidence type="ECO:0000255" key="4">
    <source>
        <dbReference type="PROSITE-ProRule" id="PRU00072"/>
    </source>
</evidence>
<evidence type="ECO:0000255" key="5">
    <source>
        <dbReference type="PROSITE-ProRule" id="PRU00159"/>
    </source>
</evidence>
<evidence type="ECO:0000255" key="6">
    <source>
        <dbReference type="PROSITE-ProRule" id="PRU10027"/>
    </source>
</evidence>
<evidence type="ECO:0000305" key="7"/>
<evidence type="ECO:0000312" key="8">
    <source>
        <dbReference type="EMBL" id="EDW99417.1"/>
    </source>
</evidence>
<accession>B4IT27</accession>
<feature type="chain" id="PRO_0000392572" description="Serine/threonine-protein kinase GE16371">
    <location>
        <begin position="1"/>
        <end position="750"/>
    </location>
</feature>
<feature type="domain" description="Doublecortin 1" evidence="4">
    <location>
        <begin position="159"/>
        <end position="245"/>
    </location>
</feature>
<feature type="domain" description="Doublecortin 2" evidence="4">
    <location>
        <begin position="315"/>
        <end position="398"/>
    </location>
</feature>
<feature type="domain" description="Protein kinase" evidence="5">
    <location>
        <begin position="479"/>
        <end position="737"/>
    </location>
</feature>
<feature type="active site" description="Proton acceptor" evidence="1 5 6">
    <location>
        <position position="600"/>
    </location>
</feature>
<feature type="binding site" evidence="1 5">
    <location>
        <begin position="485"/>
        <end position="493"/>
    </location>
    <ligand>
        <name>ATP</name>
        <dbReference type="ChEBI" id="CHEBI:30616"/>
    </ligand>
</feature>
<feature type="binding site" evidence="1 5">
    <location>
        <position position="508"/>
    </location>
    <ligand>
        <name>ATP</name>
        <dbReference type="ChEBI" id="CHEBI:30616"/>
    </ligand>
</feature>
<keyword id="KW-0067">ATP-binding</keyword>
<keyword id="KW-0418">Kinase</keyword>
<keyword id="KW-0547">Nucleotide-binding</keyword>
<keyword id="KW-0597">Phosphoprotein</keyword>
<keyword id="KW-0677">Repeat</keyword>
<keyword id="KW-0723">Serine/threonine-protein kinase</keyword>
<keyword id="KW-0808">Transferase</keyword>